<name>PURR_SHIFL</name>
<reference key="1">
    <citation type="journal article" date="2002" name="Nucleic Acids Res.">
        <title>Genome sequence of Shigella flexneri 2a: insights into pathogenicity through comparison with genomes of Escherichia coli K12 and O157.</title>
        <authorList>
            <person name="Jin Q."/>
            <person name="Yuan Z."/>
            <person name="Xu J."/>
            <person name="Wang Y."/>
            <person name="Shen Y."/>
            <person name="Lu W."/>
            <person name="Wang J."/>
            <person name="Liu H."/>
            <person name="Yang J."/>
            <person name="Yang F."/>
            <person name="Zhang X."/>
            <person name="Zhang J."/>
            <person name="Yang G."/>
            <person name="Wu H."/>
            <person name="Qu D."/>
            <person name="Dong J."/>
            <person name="Sun L."/>
            <person name="Xue Y."/>
            <person name="Zhao A."/>
            <person name="Gao Y."/>
            <person name="Zhu J."/>
            <person name="Kan B."/>
            <person name="Ding K."/>
            <person name="Chen S."/>
            <person name="Cheng H."/>
            <person name="Yao Z."/>
            <person name="He B."/>
            <person name="Chen R."/>
            <person name="Ma D."/>
            <person name="Qiang B."/>
            <person name="Wen Y."/>
            <person name="Hou Y."/>
            <person name="Yu J."/>
        </authorList>
    </citation>
    <scope>NUCLEOTIDE SEQUENCE [LARGE SCALE GENOMIC DNA]</scope>
    <source>
        <strain>301 / Serotype 2a</strain>
    </source>
</reference>
<reference key="2">
    <citation type="journal article" date="2003" name="Infect. Immun.">
        <title>Complete genome sequence and comparative genomics of Shigella flexneri serotype 2a strain 2457T.</title>
        <authorList>
            <person name="Wei J."/>
            <person name="Goldberg M.B."/>
            <person name="Burland V."/>
            <person name="Venkatesan M.M."/>
            <person name="Deng W."/>
            <person name="Fournier G."/>
            <person name="Mayhew G.F."/>
            <person name="Plunkett G. III"/>
            <person name="Rose D.J."/>
            <person name="Darling A."/>
            <person name="Mau B."/>
            <person name="Perna N.T."/>
            <person name="Payne S.M."/>
            <person name="Runyen-Janecky L.J."/>
            <person name="Zhou S."/>
            <person name="Schwartz D.C."/>
            <person name="Blattner F.R."/>
        </authorList>
    </citation>
    <scope>NUCLEOTIDE SEQUENCE [LARGE SCALE GENOMIC DNA]</scope>
    <source>
        <strain>ATCC 700930 / 2457T / Serotype 2a</strain>
    </source>
</reference>
<gene>
    <name evidence="2" type="primary">purR</name>
    <name type="ordered locus">SF1686</name>
    <name type="ordered locus">S1818</name>
</gene>
<organism>
    <name type="scientific">Shigella flexneri</name>
    <dbReference type="NCBI Taxonomy" id="623"/>
    <lineage>
        <taxon>Bacteria</taxon>
        <taxon>Pseudomonadati</taxon>
        <taxon>Pseudomonadota</taxon>
        <taxon>Gammaproteobacteria</taxon>
        <taxon>Enterobacterales</taxon>
        <taxon>Enterobacteriaceae</taxon>
        <taxon>Shigella</taxon>
    </lineage>
</organism>
<proteinExistence type="inferred from homology"/>
<evidence type="ECO:0000250" key="1"/>
<evidence type="ECO:0000255" key="2">
    <source>
        <dbReference type="HAMAP-Rule" id="MF_01277"/>
    </source>
</evidence>
<evidence type="ECO:0000305" key="3"/>
<dbReference type="EMBL" id="AE005674">
    <property type="protein sequence ID" value="AAN43265.1"/>
    <property type="status" value="ALT_SEQ"/>
    <property type="molecule type" value="Genomic_DNA"/>
</dbReference>
<dbReference type="EMBL" id="AE014073">
    <property type="protein sequence ID" value="AAP17154.1"/>
    <property type="molecule type" value="Genomic_DNA"/>
</dbReference>
<dbReference type="RefSeq" id="WP_000190982.1">
    <property type="nucleotide sequence ID" value="NZ_WPGW01000025.1"/>
</dbReference>
<dbReference type="SMR" id="P0ACP9"/>
<dbReference type="STRING" id="198214.SF1686"/>
<dbReference type="PaxDb" id="198214-SF1686"/>
<dbReference type="GeneID" id="75204504"/>
<dbReference type="KEGG" id="sfx:S1818"/>
<dbReference type="PATRIC" id="fig|623.157.peg.2769"/>
<dbReference type="HOGENOM" id="CLU_037628_6_2_6"/>
<dbReference type="UniPathway" id="UPA00488"/>
<dbReference type="Proteomes" id="UP000001006">
    <property type="component" value="Chromosome"/>
</dbReference>
<dbReference type="Proteomes" id="UP000002673">
    <property type="component" value="Chromosome"/>
</dbReference>
<dbReference type="GO" id="GO:0003700">
    <property type="term" value="F:DNA-binding transcription factor activity"/>
    <property type="evidence" value="ECO:0007669"/>
    <property type="project" value="TreeGrafter"/>
</dbReference>
<dbReference type="GO" id="GO:0000976">
    <property type="term" value="F:transcription cis-regulatory region binding"/>
    <property type="evidence" value="ECO:0007669"/>
    <property type="project" value="TreeGrafter"/>
</dbReference>
<dbReference type="GO" id="GO:0045892">
    <property type="term" value="P:negative regulation of DNA-templated transcription"/>
    <property type="evidence" value="ECO:0007669"/>
    <property type="project" value="UniProtKB-UniRule"/>
</dbReference>
<dbReference type="GO" id="GO:0006164">
    <property type="term" value="P:purine nucleotide biosynthetic process"/>
    <property type="evidence" value="ECO:0007669"/>
    <property type="project" value="UniProtKB-UniPathway"/>
</dbReference>
<dbReference type="CDD" id="cd01392">
    <property type="entry name" value="HTH_LacI"/>
    <property type="match status" value="1"/>
</dbReference>
<dbReference type="CDD" id="cd06275">
    <property type="entry name" value="PBP1_PurR"/>
    <property type="match status" value="1"/>
</dbReference>
<dbReference type="FunFam" id="1.10.260.40:FF:000002">
    <property type="entry name" value="HTH-type transcriptional repressor PurR"/>
    <property type="match status" value="1"/>
</dbReference>
<dbReference type="FunFam" id="3.40.50.2300:FF:000045">
    <property type="entry name" value="HTH-type transcriptional repressor PurR"/>
    <property type="match status" value="1"/>
</dbReference>
<dbReference type="Gene3D" id="3.40.50.2300">
    <property type="match status" value="2"/>
</dbReference>
<dbReference type="Gene3D" id="1.10.260.40">
    <property type="entry name" value="lambda repressor-like DNA-binding domains"/>
    <property type="match status" value="1"/>
</dbReference>
<dbReference type="HAMAP" id="MF_01277">
    <property type="entry name" value="HTH_type_PurR"/>
    <property type="match status" value="1"/>
</dbReference>
<dbReference type="InterPro" id="IPR000843">
    <property type="entry name" value="HTH_LacI"/>
</dbReference>
<dbReference type="InterPro" id="IPR046335">
    <property type="entry name" value="LacI/GalR-like_sensor"/>
</dbReference>
<dbReference type="InterPro" id="IPR010982">
    <property type="entry name" value="Lambda_DNA-bd_dom_sf"/>
</dbReference>
<dbReference type="InterPro" id="IPR028082">
    <property type="entry name" value="Peripla_BP_I"/>
</dbReference>
<dbReference type="InterPro" id="IPR023588">
    <property type="entry name" value="Tscrpt_reg_HTH_PurR"/>
</dbReference>
<dbReference type="NCBIfam" id="NF007979">
    <property type="entry name" value="PRK10703.1"/>
    <property type="match status" value="1"/>
</dbReference>
<dbReference type="PANTHER" id="PTHR30146:SF148">
    <property type="entry name" value="HTH-TYPE TRANSCRIPTIONAL REPRESSOR PURR-RELATED"/>
    <property type="match status" value="1"/>
</dbReference>
<dbReference type="PANTHER" id="PTHR30146">
    <property type="entry name" value="LACI-RELATED TRANSCRIPTIONAL REPRESSOR"/>
    <property type="match status" value="1"/>
</dbReference>
<dbReference type="Pfam" id="PF00356">
    <property type="entry name" value="LacI"/>
    <property type="match status" value="1"/>
</dbReference>
<dbReference type="Pfam" id="PF13377">
    <property type="entry name" value="Peripla_BP_3"/>
    <property type="match status" value="1"/>
</dbReference>
<dbReference type="PRINTS" id="PR00036">
    <property type="entry name" value="HTHLACI"/>
</dbReference>
<dbReference type="SMART" id="SM00354">
    <property type="entry name" value="HTH_LACI"/>
    <property type="match status" value="1"/>
</dbReference>
<dbReference type="SUPFAM" id="SSF47413">
    <property type="entry name" value="lambda repressor-like DNA-binding domains"/>
    <property type="match status" value="1"/>
</dbReference>
<dbReference type="SUPFAM" id="SSF53822">
    <property type="entry name" value="Periplasmic binding protein-like I"/>
    <property type="match status" value="1"/>
</dbReference>
<dbReference type="PROSITE" id="PS00356">
    <property type="entry name" value="HTH_LACI_1"/>
    <property type="match status" value="1"/>
</dbReference>
<dbReference type="PROSITE" id="PS50932">
    <property type="entry name" value="HTH_LACI_2"/>
    <property type="match status" value="1"/>
</dbReference>
<protein>
    <recommendedName>
        <fullName evidence="2">HTH-type transcriptional repressor PurR</fullName>
    </recommendedName>
    <alternativeName>
        <fullName evidence="2">Pur regulon repressor</fullName>
    </alternativeName>
    <alternativeName>
        <fullName evidence="2">Purine nucleotide synthesis repressor</fullName>
    </alternativeName>
</protein>
<feature type="initiator methionine" description="Removed" evidence="1">
    <location>
        <position position="1"/>
    </location>
</feature>
<feature type="chain" id="PRO_0000107978" description="HTH-type transcriptional repressor PurR">
    <location>
        <begin position="2"/>
        <end position="341"/>
    </location>
</feature>
<feature type="domain" description="HTH lacI-type" evidence="2">
    <location>
        <begin position="2"/>
        <end position="56"/>
    </location>
</feature>
<feature type="DNA-binding region" description="H-T-H motif" evidence="2">
    <location>
        <begin position="4"/>
        <end position="23"/>
    </location>
</feature>
<feature type="DNA-binding region" evidence="2">
    <location>
        <begin position="48"/>
        <end position="56"/>
    </location>
</feature>
<feature type="binding site" evidence="2">
    <location>
        <position position="73"/>
    </location>
    <ligand>
        <name>hypoxanthine</name>
        <dbReference type="ChEBI" id="CHEBI:17368"/>
    </ligand>
</feature>
<feature type="binding site" evidence="2">
    <location>
        <position position="190"/>
    </location>
    <ligand>
        <name>hypoxanthine</name>
        <dbReference type="ChEBI" id="CHEBI:17368"/>
    </ligand>
</feature>
<feature type="binding site" evidence="2">
    <location>
        <position position="192"/>
    </location>
    <ligand>
        <name>hypoxanthine</name>
        <dbReference type="ChEBI" id="CHEBI:17368"/>
    </ligand>
</feature>
<feature type="binding site" evidence="2">
    <location>
        <position position="221"/>
    </location>
    <ligand>
        <name>hypoxanthine</name>
        <dbReference type="ChEBI" id="CHEBI:17368"/>
    </ligand>
</feature>
<feature type="binding site" evidence="2">
    <location>
        <position position="275"/>
    </location>
    <ligand>
        <name>hypoxanthine</name>
        <dbReference type="ChEBI" id="CHEBI:17368"/>
    </ligand>
</feature>
<keyword id="KW-0238">DNA-binding</keyword>
<keyword id="KW-0658">Purine biosynthesis</keyword>
<keyword id="KW-1185">Reference proteome</keyword>
<keyword id="KW-0678">Repressor</keyword>
<keyword id="KW-0804">Transcription</keyword>
<keyword id="KW-0805">Transcription regulation</keyword>
<accession>P0ACP9</accession>
<accession>P15039</accession>
<accession>Q83RB1</accession>
<sequence length="341" mass="38175">MATIKDVAKRANVSTTTVSHVINKTRFVAEETRNAVWAAIKELHYSPSAVARSLKVNHTKSIGLLATSSEAAYFAEIIEAVEKNCFQKGYTLILGNAWNNLEKQRAYLSMMAQKRVDGLLVMCSEYPEPLLAMLEEYRHIPMVVMDWGEAKADFTDAVIDNAFEGGYMAGRYLIERGHREIGVIPGPLERNTGAGRLAGFMKAMEEAMIKVPESWIVQGDFEPESGYRAMQQILSQPHRPTAVFCGGDIMAMGALCAADEMGLRVPQDVSLIGYDNVRNARYFTPALTTIHQPKDSLGETAFNMLLDRIVNKREEPQSIEVHPRLIERRSVADGPFRDYRR</sequence>
<comment type="function">
    <text evidence="2">Is the main repressor of the genes involved in the de novo synthesis of purine nucleotides, regulating purB, purC, purEK, purF, purHD, purL, purMN and guaBA expression. PurR is allosterically activated to bind its cognate DNA by binding the purine corepressors, hypoxanthine or guanine, thereby effecting transcription repression.</text>
</comment>
<comment type="pathway">
    <text>Purine metabolism; purine nucleotide biosynthesis [regulation].</text>
</comment>
<comment type="subunit">
    <text evidence="2">Homodimer.</text>
</comment>
<comment type="domain">
    <text evidence="2">Consists of two structural and functional domains: an N-terminal DNA-binding domain, approximately the first 60 residues, and a larger C-terminal domain, approximately 280 residues, which imparts the function of corepressor binding and oligomerization.</text>
</comment>
<comment type="sequence caution" evidence="3">
    <conflict type="miscellaneous discrepancy">
        <sequence resource="EMBL-CDS" id="AAN43265"/>
    </conflict>
    <text>Several sequencing errors from position 290 onward.</text>
</comment>